<comment type="subcellular location">
    <subcellularLocation>
        <location evidence="1">Cell inner membrane</location>
        <topology evidence="1">Multi-pass membrane protein</topology>
    </subcellularLocation>
</comment>
<comment type="similarity">
    <text evidence="3">Belongs to the DedA family.</text>
</comment>
<name>YQJA_ECOL6</name>
<reference key="1">
    <citation type="journal article" date="2002" name="Proc. Natl. Acad. Sci. U.S.A.">
        <title>Extensive mosaic structure revealed by the complete genome sequence of uropathogenic Escherichia coli.</title>
        <authorList>
            <person name="Welch R.A."/>
            <person name="Burland V."/>
            <person name="Plunkett G. III"/>
            <person name="Redford P."/>
            <person name="Roesch P."/>
            <person name="Rasko D."/>
            <person name="Buckles E.L."/>
            <person name="Liou S.-R."/>
            <person name="Boutin A."/>
            <person name="Hackett J."/>
            <person name="Stroud D."/>
            <person name="Mayhew G.F."/>
            <person name="Rose D.J."/>
            <person name="Zhou S."/>
            <person name="Schwartz D.C."/>
            <person name="Perna N.T."/>
            <person name="Mobley H.L.T."/>
            <person name="Donnenberg M.S."/>
            <person name="Blattner F.R."/>
        </authorList>
    </citation>
    <scope>NUCLEOTIDE SEQUENCE [LARGE SCALE GENOMIC DNA]</scope>
    <source>
        <strain>CFT073 / ATCC 700928 / UPEC</strain>
    </source>
</reference>
<accession>P0AA64</accession>
<accession>P42614</accession>
<gene>
    <name type="primary">yqjA</name>
    <name type="ordered locus">c3853</name>
</gene>
<proteinExistence type="inferred from homology"/>
<protein>
    <recommendedName>
        <fullName>Inner membrane protein YqjA</fullName>
    </recommendedName>
</protein>
<organism>
    <name type="scientific">Escherichia coli O6:H1 (strain CFT073 / ATCC 700928 / UPEC)</name>
    <dbReference type="NCBI Taxonomy" id="199310"/>
    <lineage>
        <taxon>Bacteria</taxon>
        <taxon>Pseudomonadati</taxon>
        <taxon>Pseudomonadota</taxon>
        <taxon>Gammaproteobacteria</taxon>
        <taxon>Enterobacterales</taxon>
        <taxon>Enterobacteriaceae</taxon>
        <taxon>Escherichia</taxon>
    </lineage>
</organism>
<feature type="chain" id="PRO_0000161418" description="Inner membrane protein YqjA">
    <location>
        <begin position="1"/>
        <end position="220"/>
    </location>
</feature>
<feature type="topological domain" description="Periplasmic" evidence="2">
    <location>
        <begin position="1"/>
        <end position="27"/>
    </location>
</feature>
<feature type="transmembrane region" description="Helical" evidence="2">
    <location>
        <begin position="28"/>
        <end position="48"/>
    </location>
</feature>
<feature type="topological domain" description="Cytoplasmic" evidence="2">
    <location>
        <begin position="49"/>
        <end position="52"/>
    </location>
</feature>
<feature type="transmembrane region" description="Helical" evidence="2">
    <location>
        <begin position="53"/>
        <end position="73"/>
    </location>
</feature>
<feature type="transmembrane region" description="Helical" evidence="2">
    <location>
        <begin position="74"/>
        <end position="94"/>
    </location>
</feature>
<feature type="topological domain" description="Cytoplasmic" evidence="2">
    <location>
        <begin position="95"/>
        <end position="154"/>
    </location>
</feature>
<feature type="transmembrane region" description="Helical" evidence="2">
    <location>
        <begin position="155"/>
        <end position="175"/>
    </location>
</feature>
<feature type="topological domain" description="Periplasmic" evidence="2">
    <location>
        <begin position="176"/>
        <end position="191"/>
    </location>
</feature>
<feature type="transmembrane region" description="Helical" evidence="2">
    <location>
        <begin position="192"/>
        <end position="212"/>
    </location>
</feature>
<feature type="topological domain" description="Cytoplasmic" evidence="2">
    <location>
        <begin position="213"/>
        <end position="220"/>
    </location>
</feature>
<sequence length="220" mass="24585">MELLTQLLQALWAQDFETLANPSMIGMLYFVLFVILFLENGLLPAAFLPGDSLLVLVGVLIAKGAMGYPQTILLLTVAASLGCWVSYIQGRWLGNTRTVQNWLSHLPAHYHQRAHHLFHKHGLSALLIGRFIAFVRTLLPTIAGLSGLNNARFQFFNWMSGLLWVLILTTLGYMLGKTPVFLKYEDQLMSCLMLLPVVLLVFGLAGSLVVLWKKKYGNRG</sequence>
<evidence type="ECO:0000250" key="1"/>
<evidence type="ECO:0000255" key="2"/>
<evidence type="ECO:0000305" key="3"/>
<dbReference type="EMBL" id="AE014075">
    <property type="protein sequence ID" value="AAN82298.1"/>
    <property type="molecule type" value="Genomic_DNA"/>
</dbReference>
<dbReference type="RefSeq" id="WP_000422149.1">
    <property type="nucleotide sequence ID" value="NZ_CP051263.1"/>
</dbReference>
<dbReference type="STRING" id="199310.c3853"/>
<dbReference type="GeneID" id="86947970"/>
<dbReference type="KEGG" id="ecc:c3853"/>
<dbReference type="eggNOG" id="COG0586">
    <property type="taxonomic scope" value="Bacteria"/>
</dbReference>
<dbReference type="HOGENOM" id="CLU_044208_6_2_6"/>
<dbReference type="BioCyc" id="ECOL199310:C3853-MONOMER"/>
<dbReference type="Proteomes" id="UP000001410">
    <property type="component" value="Chromosome"/>
</dbReference>
<dbReference type="GO" id="GO:0005886">
    <property type="term" value="C:plasma membrane"/>
    <property type="evidence" value="ECO:0007669"/>
    <property type="project" value="UniProtKB-SubCell"/>
</dbReference>
<dbReference type="InterPro" id="IPR032818">
    <property type="entry name" value="DedA-like"/>
</dbReference>
<dbReference type="InterPro" id="IPR032816">
    <property type="entry name" value="VTT_dom"/>
</dbReference>
<dbReference type="PANTHER" id="PTHR30353">
    <property type="entry name" value="INNER MEMBRANE PROTEIN DEDA-RELATED"/>
    <property type="match status" value="1"/>
</dbReference>
<dbReference type="PANTHER" id="PTHR30353:SF11">
    <property type="entry name" value="INNER MEMBRANE PROTEIN YQJA"/>
    <property type="match status" value="1"/>
</dbReference>
<dbReference type="Pfam" id="PF09335">
    <property type="entry name" value="VTT_dom"/>
    <property type="match status" value="1"/>
</dbReference>
<keyword id="KW-0997">Cell inner membrane</keyword>
<keyword id="KW-1003">Cell membrane</keyword>
<keyword id="KW-0472">Membrane</keyword>
<keyword id="KW-1185">Reference proteome</keyword>
<keyword id="KW-0812">Transmembrane</keyword>
<keyword id="KW-1133">Transmembrane helix</keyword>